<feature type="chain" id="PRO_0000158036" description="Protein-glutamate methylesterase/protein-glutamine glutaminase 1">
    <location>
        <begin position="1"/>
        <end position="377"/>
    </location>
</feature>
<feature type="domain" description="Response regulatory" evidence="1">
    <location>
        <begin position="4"/>
        <end position="121"/>
    </location>
</feature>
<feature type="domain" description="CheB-type methylesterase" evidence="1">
    <location>
        <begin position="184"/>
        <end position="377"/>
    </location>
</feature>
<feature type="region of interest" description="Disordered" evidence="2">
    <location>
        <begin position="138"/>
        <end position="170"/>
    </location>
</feature>
<feature type="compositionally biased region" description="Low complexity" evidence="2">
    <location>
        <begin position="146"/>
        <end position="157"/>
    </location>
</feature>
<feature type="active site" evidence="1">
    <location>
        <position position="196"/>
    </location>
</feature>
<feature type="active site" evidence="1">
    <location>
        <position position="223"/>
    </location>
</feature>
<feature type="active site" evidence="1">
    <location>
        <position position="319"/>
    </location>
</feature>
<feature type="modified residue" description="4-aspartylphosphate" evidence="1">
    <location>
        <position position="55"/>
    </location>
</feature>
<accession>Q9KQD8</accession>
<name>CHEB1_VIBCH</name>
<organism>
    <name type="scientific">Vibrio cholerae serotype O1 (strain ATCC 39315 / El Tor Inaba N16961)</name>
    <dbReference type="NCBI Taxonomy" id="243277"/>
    <lineage>
        <taxon>Bacteria</taxon>
        <taxon>Pseudomonadati</taxon>
        <taxon>Pseudomonadota</taxon>
        <taxon>Gammaproteobacteria</taxon>
        <taxon>Vibrionales</taxon>
        <taxon>Vibrionaceae</taxon>
        <taxon>Vibrio</taxon>
    </lineage>
</organism>
<reference key="1">
    <citation type="journal article" date="2000" name="Nature">
        <title>DNA sequence of both chromosomes of the cholera pathogen Vibrio cholerae.</title>
        <authorList>
            <person name="Heidelberg J.F."/>
            <person name="Eisen J.A."/>
            <person name="Nelson W.C."/>
            <person name="Clayton R.A."/>
            <person name="Gwinn M.L."/>
            <person name="Dodson R.J."/>
            <person name="Haft D.H."/>
            <person name="Hickey E.K."/>
            <person name="Peterson J.D."/>
            <person name="Umayam L.A."/>
            <person name="Gill S.R."/>
            <person name="Nelson K.E."/>
            <person name="Read T.D."/>
            <person name="Tettelin H."/>
            <person name="Richardson D.L."/>
            <person name="Ermolaeva M.D."/>
            <person name="Vamathevan J.J."/>
            <person name="Bass S."/>
            <person name="Qin H."/>
            <person name="Dragoi I."/>
            <person name="Sellers P."/>
            <person name="McDonald L.A."/>
            <person name="Utterback T.R."/>
            <person name="Fleischmann R.D."/>
            <person name="Nierman W.C."/>
            <person name="White O."/>
            <person name="Salzberg S.L."/>
            <person name="Smith H.O."/>
            <person name="Colwell R.R."/>
            <person name="Mekalanos J.J."/>
            <person name="Venter J.C."/>
            <person name="Fraser C.M."/>
        </authorList>
    </citation>
    <scope>NUCLEOTIDE SEQUENCE [LARGE SCALE GENOMIC DNA]</scope>
    <source>
        <strain>ATCC 39315 / El Tor Inaba N16961</strain>
    </source>
</reference>
<gene>
    <name evidence="1" type="primary">cheB1</name>
    <name type="ordered locus">VC_2062</name>
</gene>
<dbReference type="EC" id="3.1.1.61" evidence="1"/>
<dbReference type="EC" id="3.5.1.44" evidence="1"/>
<dbReference type="EMBL" id="AE003852">
    <property type="protein sequence ID" value="AAF95208.1"/>
    <property type="molecule type" value="Genomic_DNA"/>
</dbReference>
<dbReference type="PIR" id="H82122">
    <property type="entry name" value="H82122"/>
</dbReference>
<dbReference type="RefSeq" id="NP_231694.1">
    <property type="nucleotide sequence ID" value="NC_002505.1"/>
</dbReference>
<dbReference type="RefSeq" id="WP_000985860.1">
    <property type="nucleotide sequence ID" value="NZ_LT906614.1"/>
</dbReference>
<dbReference type="SMR" id="Q9KQD8"/>
<dbReference type="STRING" id="243277.VC_2062"/>
<dbReference type="DNASU" id="2613442"/>
<dbReference type="EnsemblBacteria" id="AAF95208">
    <property type="protein sequence ID" value="AAF95208"/>
    <property type="gene ID" value="VC_2062"/>
</dbReference>
<dbReference type="KEGG" id="vch:VC_2062"/>
<dbReference type="PATRIC" id="fig|243277.26.peg.1971"/>
<dbReference type="eggNOG" id="COG2201">
    <property type="taxonomic scope" value="Bacteria"/>
</dbReference>
<dbReference type="HOGENOM" id="CLU_000445_51_0_6"/>
<dbReference type="Proteomes" id="UP000000584">
    <property type="component" value="Chromosome 1"/>
</dbReference>
<dbReference type="GO" id="GO:0005737">
    <property type="term" value="C:cytoplasm"/>
    <property type="evidence" value="ECO:0007669"/>
    <property type="project" value="UniProtKB-SubCell"/>
</dbReference>
<dbReference type="GO" id="GO:0000156">
    <property type="term" value="F:phosphorelay response regulator activity"/>
    <property type="evidence" value="ECO:0007669"/>
    <property type="project" value="InterPro"/>
</dbReference>
<dbReference type="GO" id="GO:0008984">
    <property type="term" value="F:protein-glutamate methylesterase activity"/>
    <property type="evidence" value="ECO:0007669"/>
    <property type="project" value="UniProtKB-UniRule"/>
</dbReference>
<dbReference type="GO" id="GO:0050568">
    <property type="term" value="F:protein-glutamine glutaminase activity"/>
    <property type="evidence" value="ECO:0007669"/>
    <property type="project" value="UniProtKB-UniRule"/>
</dbReference>
<dbReference type="GO" id="GO:0006935">
    <property type="term" value="P:chemotaxis"/>
    <property type="evidence" value="ECO:0007669"/>
    <property type="project" value="UniProtKB-UniRule"/>
</dbReference>
<dbReference type="CDD" id="cd16432">
    <property type="entry name" value="CheB_Rec"/>
    <property type="match status" value="1"/>
</dbReference>
<dbReference type="CDD" id="cd17541">
    <property type="entry name" value="REC_CheB-like"/>
    <property type="match status" value="1"/>
</dbReference>
<dbReference type="FunFam" id="3.40.50.2300:FF:000077">
    <property type="entry name" value="Chemotaxis response regulator"/>
    <property type="match status" value="1"/>
</dbReference>
<dbReference type="FunFam" id="3.40.50.180:FF:000001">
    <property type="entry name" value="Protein-glutamate methylesterase/protein-glutamine glutaminase"/>
    <property type="match status" value="1"/>
</dbReference>
<dbReference type="Gene3D" id="3.40.50.2300">
    <property type="match status" value="1"/>
</dbReference>
<dbReference type="Gene3D" id="3.40.50.180">
    <property type="entry name" value="Methylesterase CheB, C-terminal domain"/>
    <property type="match status" value="1"/>
</dbReference>
<dbReference type="HAMAP" id="MF_00099">
    <property type="entry name" value="CheB_chemtxs"/>
    <property type="match status" value="1"/>
</dbReference>
<dbReference type="InterPro" id="IPR008248">
    <property type="entry name" value="CheB-like"/>
</dbReference>
<dbReference type="InterPro" id="IPR035909">
    <property type="entry name" value="CheB_C"/>
</dbReference>
<dbReference type="InterPro" id="IPR011006">
    <property type="entry name" value="CheY-like_superfamily"/>
</dbReference>
<dbReference type="InterPro" id="IPR000673">
    <property type="entry name" value="Sig_transdc_resp-reg_Me-estase"/>
</dbReference>
<dbReference type="InterPro" id="IPR001789">
    <property type="entry name" value="Sig_transdc_resp-reg_receiver"/>
</dbReference>
<dbReference type="NCBIfam" id="NF001965">
    <property type="entry name" value="PRK00742.1"/>
    <property type="match status" value="1"/>
</dbReference>
<dbReference type="PANTHER" id="PTHR42872">
    <property type="entry name" value="PROTEIN-GLUTAMATE METHYLESTERASE/PROTEIN-GLUTAMINE GLUTAMINASE"/>
    <property type="match status" value="1"/>
</dbReference>
<dbReference type="PANTHER" id="PTHR42872:SF3">
    <property type="entry name" value="PROTEIN-GLUTAMATE METHYLESTERASE_PROTEIN-GLUTAMINE GLUTAMINASE 1"/>
    <property type="match status" value="1"/>
</dbReference>
<dbReference type="Pfam" id="PF01339">
    <property type="entry name" value="CheB_methylest"/>
    <property type="match status" value="1"/>
</dbReference>
<dbReference type="Pfam" id="PF00072">
    <property type="entry name" value="Response_reg"/>
    <property type="match status" value="1"/>
</dbReference>
<dbReference type="PIRSF" id="PIRSF000876">
    <property type="entry name" value="RR_chemtxs_CheB"/>
    <property type="match status" value="1"/>
</dbReference>
<dbReference type="SMART" id="SM00448">
    <property type="entry name" value="REC"/>
    <property type="match status" value="1"/>
</dbReference>
<dbReference type="SUPFAM" id="SSF52172">
    <property type="entry name" value="CheY-like"/>
    <property type="match status" value="1"/>
</dbReference>
<dbReference type="SUPFAM" id="SSF52738">
    <property type="entry name" value="Methylesterase CheB, C-terminal domain"/>
    <property type="match status" value="1"/>
</dbReference>
<dbReference type="PROSITE" id="PS50122">
    <property type="entry name" value="CHEB"/>
    <property type="match status" value="1"/>
</dbReference>
<dbReference type="PROSITE" id="PS50110">
    <property type="entry name" value="RESPONSE_REGULATORY"/>
    <property type="match status" value="1"/>
</dbReference>
<comment type="function">
    <text evidence="1">Involved in chemotaxis. Part of a chemotaxis signal transduction system that modulates chemotaxis in response to various stimuli. Catalyzes the demethylation of specific methylglutamate residues introduced into the chemoreceptors (methyl-accepting chemotaxis proteins or MCP) by CheR. Also mediates the irreversible deamidation of specific glutamine residues to glutamic acid.</text>
</comment>
<comment type="catalytic activity">
    <reaction evidence="1">
        <text>[protein]-L-glutamate 5-O-methyl ester + H2O = L-glutamyl-[protein] + methanol + H(+)</text>
        <dbReference type="Rhea" id="RHEA:23236"/>
        <dbReference type="Rhea" id="RHEA-COMP:10208"/>
        <dbReference type="Rhea" id="RHEA-COMP:10311"/>
        <dbReference type="ChEBI" id="CHEBI:15377"/>
        <dbReference type="ChEBI" id="CHEBI:15378"/>
        <dbReference type="ChEBI" id="CHEBI:17790"/>
        <dbReference type="ChEBI" id="CHEBI:29973"/>
        <dbReference type="ChEBI" id="CHEBI:82795"/>
        <dbReference type="EC" id="3.1.1.61"/>
    </reaction>
</comment>
<comment type="catalytic activity">
    <reaction evidence="1">
        <text>L-glutaminyl-[protein] + H2O = L-glutamyl-[protein] + NH4(+)</text>
        <dbReference type="Rhea" id="RHEA:16441"/>
        <dbReference type="Rhea" id="RHEA-COMP:10207"/>
        <dbReference type="Rhea" id="RHEA-COMP:10208"/>
        <dbReference type="ChEBI" id="CHEBI:15377"/>
        <dbReference type="ChEBI" id="CHEBI:28938"/>
        <dbReference type="ChEBI" id="CHEBI:29973"/>
        <dbReference type="ChEBI" id="CHEBI:30011"/>
        <dbReference type="EC" id="3.5.1.44"/>
    </reaction>
</comment>
<comment type="subcellular location">
    <subcellularLocation>
        <location evidence="1">Cytoplasm</location>
    </subcellularLocation>
</comment>
<comment type="domain">
    <text evidence="1">Contains a C-terminal catalytic domain, and an N-terminal region which modulates catalytic activity.</text>
</comment>
<comment type="PTM">
    <text evidence="1">Phosphorylated by CheA. Phosphorylation of the N-terminal regulatory domain activates the methylesterase activity.</text>
</comment>
<comment type="miscellaneous">
    <text>In V.cholerae cheB2 is a pseudogene.</text>
</comment>
<comment type="similarity">
    <text evidence="1">Belongs to the CheB family.</text>
</comment>
<protein>
    <recommendedName>
        <fullName evidence="1">Protein-glutamate methylesterase/protein-glutamine glutaminase 1</fullName>
        <ecNumber evidence="1">3.1.1.61</ecNumber>
        <ecNumber evidence="1">3.5.1.44</ecNumber>
    </recommendedName>
</protein>
<proteinExistence type="inferred from homology"/>
<evidence type="ECO:0000255" key="1">
    <source>
        <dbReference type="HAMAP-Rule" id="MF_00099"/>
    </source>
</evidence>
<evidence type="ECO:0000256" key="2">
    <source>
        <dbReference type="SAM" id="MobiDB-lite"/>
    </source>
</evidence>
<keyword id="KW-0145">Chemotaxis</keyword>
<keyword id="KW-0963">Cytoplasm</keyword>
<keyword id="KW-0378">Hydrolase</keyword>
<keyword id="KW-0597">Phosphoprotein</keyword>
<keyword id="KW-1185">Reference proteome</keyword>
<sequence length="377" mass="40379">MAIKVLVVDDSSFFRRRVSEIINSESRLEVIDVAVNGKEAVEKAARLKPDVITMDIEMPVMDGISAVREIMANNPVPILMFSSLTHDGAKATLDALDAGALDFLPKKFEDIARNRDEAVTLLQQRVLSIASKKMFLRRPAAPRPAPTTSIAASSSLSQERAAATSPLGNRPSTAVSAATRFKASGKKYQLTAIGTSTGGPVALQKILTKLPVNYPHPIVLIQHMPATFTAAFASRLNSLCKIEVKEAEDGDMLRPGVAYLAPGGKQMMLDGRPGAARLRIIDGGDRMNYKPCVDVTFGSAAKIFGDKVLSMILTGMGADGREGARMLKQAGATIWAQDEESCVVYGMPQAVAKAGISTEDLPLERIAERMLVEVGLA</sequence>